<name>HBG2_GORGO</name>
<gene>
    <name type="primary">HBG2</name>
</gene>
<reference key="1">
    <citation type="journal article" date="1984" name="Mol. Biol. Evol.">
        <title>The sequence of the gorilla fetal globin genes: evidence for multiple gene conversions in human evolution.</title>
        <authorList>
            <person name="Scott A.F."/>
            <person name="Heath P."/>
            <person name="Trusko S."/>
            <person name="Boyer S.H."/>
            <person name="Prass W."/>
            <person name="Goodman M."/>
            <person name="Czelusniak J."/>
            <person name="Chang L.-Y.E."/>
            <person name="Slightom J.L."/>
        </authorList>
    </citation>
    <scope>NUCLEOTIDE SEQUENCE [GENOMIC DNA]</scope>
</reference>
<reference key="2">
    <citation type="journal article" date="1992" name="Mol. Phylogenet. Evol.">
        <title>Reexamination of the African hominoid trichotomy with additional sequences from the primate beta-globin gene cluster.</title>
        <authorList>
            <person name="Bailey W.J."/>
            <person name="Hayasaka K."/>
            <person name="Skinner C.G."/>
            <person name="Kehoe S."/>
            <person name="Sieu L.C."/>
            <person name="Slightom J.L."/>
            <person name="Goodman M."/>
        </authorList>
    </citation>
    <scope>NUCLEOTIDE SEQUENCE [GENOMIC DNA]</scope>
</reference>
<organism>
    <name type="scientific">Gorilla gorilla gorilla</name>
    <name type="common">Western lowland gorilla</name>
    <dbReference type="NCBI Taxonomy" id="9595"/>
    <lineage>
        <taxon>Eukaryota</taxon>
        <taxon>Metazoa</taxon>
        <taxon>Chordata</taxon>
        <taxon>Craniata</taxon>
        <taxon>Vertebrata</taxon>
        <taxon>Euteleostomi</taxon>
        <taxon>Mammalia</taxon>
        <taxon>Eutheria</taxon>
        <taxon>Euarchontoglires</taxon>
        <taxon>Primates</taxon>
        <taxon>Haplorrhini</taxon>
        <taxon>Catarrhini</taxon>
        <taxon>Hominidae</taxon>
        <taxon>Gorilla</taxon>
    </lineage>
</organism>
<protein>
    <recommendedName>
        <fullName>Hemoglobin subunit gamma-2</fullName>
    </recommendedName>
    <alternativeName>
        <fullName>Gamma-2-globin</fullName>
    </alternativeName>
    <alternativeName>
        <fullName>Hemoglobin gamma-2 chain</fullName>
    </alternativeName>
    <alternativeName>
        <fullName>Hemoglobin gamma-G chain</fullName>
    </alternativeName>
</protein>
<comment type="function">
    <text evidence="2">Gamma chains make up the fetal hemoglobin F, in combination with alpha chains.</text>
</comment>
<comment type="subunit">
    <text evidence="2">Heterotetramer of two alpha chains and two gamma chains in fetal hemoglobin (Hb F).</text>
</comment>
<comment type="tissue specificity">
    <text>Red blood cells.</text>
</comment>
<comment type="similarity">
    <text evidence="3">Belongs to the globin family.</text>
</comment>
<accession>P62742</accession>
<accession>P06641</accession>
<keyword id="KW-0007">Acetylation</keyword>
<keyword id="KW-0349">Heme</keyword>
<keyword id="KW-0408">Iron</keyword>
<keyword id="KW-0479">Metal-binding</keyword>
<keyword id="KW-0561">Oxygen transport</keyword>
<keyword id="KW-0597">Phosphoprotein</keyword>
<keyword id="KW-1185">Reference proteome</keyword>
<keyword id="KW-0702">S-nitrosylation</keyword>
<keyword id="KW-0813">Transport</keyword>
<feature type="chain" id="PRO_0000053252" description="Hemoglobin subunit gamma-2">
    <location>
        <begin position="1"/>
        <end position="147"/>
    </location>
</feature>
<feature type="domain" description="Globin" evidence="3">
    <location>
        <begin position="3"/>
        <end position="147"/>
    </location>
</feature>
<feature type="binding site" description="distal binding residue" evidence="3">
    <location>
        <position position="64"/>
    </location>
    <ligand>
        <name>heme b</name>
        <dbReference type="ChEBI" id="CHEBI:60344"/>
    </ligand>
    <ligandPart>
        <name>Fe</name>
        <dbReference type="ChEBI" id="CHEBI:18248"/>
    </ligandPart>
</feature>
<feature type="binding site" description="proximal binding residue" evidence="3">
    <location>
        <position position="93"/>
    </location>
    <ligand>
        <name>heme b</name>
        <dbReference type="ChEBI" id="CHEBI:60344"/>
    </ligand>
    <ligandPart>
        <name>Fe</name>
        <dbReference type="ChEBI" id="CHEBI:18248"/>
    </ligandPart>
</feature>
<feature type="modified residue" description="Phosphothreonine" evidence="1">
    <location>
        <position position="13"/>
    </location>
</feature>
<feature type="modified residue" description="Phosphoserine" evidence="2">
    <location>
        <position position="45"/>
    </location>
</feature>
<feature type="modified residue" description="Phosphoserine" evidence="2">
    <location>
        <position position="51"/>
    </location>
</feature>
<feature type="modified residue" description="Phosphoserine" evidence="2">
    <location>
        <position position="53"/>
    </location>
</feature>
<feature type="modified residue" description="N6-acetyllysine" evidence="1">
    <location>
        <position position="60"/>
    </location>
</feature>
<feature type="modified residue" description="N6-acetyllysine" evidence="1">
    <location>
        <position position="83"/>
    </location>
</feature>
<feature type="modified residue" description="S-nitrosocysteine" evidence="1">
    <location>
        <position position="94"/>
    </location>
</feature>
<feature type="modified residue" description="Phosphoserine" evidence="2">
    <location>
        <position position="140"/>
    </location>
</feature>
<feature type="modified residue" description="Phosphoserine" evidence="2">
    <location>
        <position position="143"/>
    </location>
</feature>
<feature type="modified residue" description="Phosphoserine" evidence="2">
    <location>
        <position position="144"/>
    </location>
</feature>
<proteinExistence type="evidence at transcript level"/>
<sequence length="147" mass="16126">MGHFTEEDKATITSLWGKVNVEDAGGETLGRLLVVYPWTQRFFDSFGNLSSASAIMGNPKVKAHGKKVLTSLGDAIKHLDDLKGTFAQLSELHCDKLHVDPENFKLLGNVLVTVLAIHFGKEFTPEVQASWQKMVTGVASALSSRYH</sequence>
<evidence type="ECO:0000250" key="1">
    <source>
        <dbReference type="UniProtKB" id="P68871"/>
    </source>
</evidence>
<evidence type="ECO:0000250" key="2">
    <source>
        <dbReference type="UniProtKB" id="P69892"/>
    </source>
</evidence>
<evidence type="ECO:0000255" key="3">
    <source>
        <dbReference type="PROSITE-ProRule" id="PRU00238"/>
    </source>
</evidence>
<dbReference type="EMBL" id="X03111">
    <property type="protein sequence ID" value="CAA26893.1"/>
    <property type="molecule type" value="Genomic_DNA"/>
</dbReference>
<dbReference type="EMBL" id="M92295">
    <property type="protein sequence ID" value="AAA35467.1"/>
    <property type="molecule type" value="Genomic_DNA"/>
</dbReference>
<dbReference type="PIR" id="I37022">
    <property type="entry name" value="I37022"/>
</dbReference>
<dbReference type="SMR" id="P62742"/>
<dbReference type="FunCoup" id="P62742">
    <property type="interactions" value="10"/>
</dbReference>
<dbReference type="InParanoid" id="P62742"/>
<dbReference type="Proteomes" id="UP000001519">
    <property type="component" value="Unplaced"/>
</dbReference>
<dbReference type="GO" id="GO:0031838">
    <property type="term" value="C:haptoglobin-hemoglobin complex"/>
    <property type="evidence" value="ECO:0000318"/>
    <property type="project" value="GO_Central"/>
</dbReference>
<dbReference type="GO" id="GO:0005833">
    <property type="term" value="C:hemoglobin complex"/>
    <property type="evidence" value="ECO:0000318"/>
    <property type="project" value="GO_Central"/>
</dbReference>
<dbReference type="GO" id="GO:0020037">
    <property type="term" value="F:heme binding"/>
    <property type="evidence" value="ECO:0000318"/>
    <property type="project" value="GO_Central"/>
</dbReference>
<dbReference type="GO" id="GO:0031721">
    <property type="term" value="F:hemoglobin alpha binding"/>
    <property type="evidence" value="ECO:0000318"/>
    <property type="project" value="GO_Central"/>
</dbReference>
<dbReference type="GO" id="GO:0046872">
    <property type="term" value="F:metal ion binding"/>
    <property type="evidence" value="ECO:0007669"/>
    <property type="project" value="UniProtKB-KW"/>
</dbReference>
<dbReference type="GO" id="GO:0019825">
    <property type="term" value="F:oxygen binding"/>
    <property type="evidence" value="ECO:0000318"/>
    <property type="project" value="GO_Central"/>
</dbReference>
<dbReference type="GO" id="GO:0005344">
    <property type="term" value="F:oxygen carrier activity"/>
    <property type="evidence" value="ECO:0000318"/>
    <property type="project" value="GO_Central"/>
</dbReference>
<dbReference type="GO" id="GO:0098869">
    <property type="term" value="P:cellular oxidant detoxification"/>
    <property type="evidence" value="ECO:0007669"/>
    <property type="project" value="GOC"/>
</dbReference>
<dbReference type="GO" id="GO:0042744">
    <property type="term" value="P:hydrogen peroxide catabolic process"/>
    <property type="evidence" value="ECO:0000318"/>
    <property type="project" value="GO_Central"/>
</dbReference>
<dbReference type="CDD" id="cd08925">
    <property type="entry name" value="Hb-beta-like"/>
    <property type="match status" value="1"/>
</dbReference>
<dbReference type="FunFam" id="1.10.490.10:FF:000001">
    <property type="entry name" value="Hemoglobin subunit beta"/>
    <property type="match status" value="1"/>
</dbReference>
<dbReference type="Gene3D" id="1.10.490.10">
    <property type="entry name" value="Globins"/>
    <property type="match status" value="1"/>
</dbReference>
<dbReference type="InterPro" id="IPR000971">
    <property type="entry name" value="Globin"/>
</dbReference>
<dbReference type="InterPro" id="IPR009050">
    <property type="entry name" value="Globin-like_sf"/>
</dbReference>
<dbReference type="InterPro" id="IPR012292">
    <property type="entry name" value="Globin/Proto"/>
</dbReference>
<dbReference type="InterPro" id="IPR002337">
    <property type="entry name" value="Hemoglobin_b"/>
</dbReference>
<dbReference type="InterPro" id="IPR050056">
    <property type="entry name" value="Hemoglobin_oxygen_transport"/>
</dbReference>
<dbReference type="PANTHER" id="PTHR11442">
    <property type="entry name" value="HEMOGLOBIN FAMILY MEMBER"/>
    <property type="match status" value="1"/>
</dbReference>
<dbReference type="PANTHER" id="PTHR11442:SF52">
    <property type="entry name" value="HEMOGLOBIN SUBUNIT GAMMA-1"/>
    <property type="match status" value="1"/>
</dbReference>
<dbReference type="Pfam" id="PF00042">
    <property type="entry name" value="Globin"/>
    <property type="match status" value="1"/>
</dbReference>
<dbReference type="PRINTS" id="PR00814">
    <property type="entry name" value="BETAHAEM"/>
</dbReference>
<dbReference type="SUPFAM" id="SSF46458">
    <property type="entry name" value="Globin-like"/>
    <property type="match status" value="1"/>
</dbReference>
<dbReference type="PROSITE" id="PS01033">
    <property type="entry name" value="GLOBIN"/>
    <property type="match status" value="1"/>
</dbReference>